<gene>
    <name evidence="1" type="primary">folD</name>
    <name type="ordered locus">ECIAI39_0494</name>
</gene>
<feature type="chain" id="PRO_1000196777" description="Bifunctional protein FolD">
    <location>
        <begin position="1"/>
        <end position="288"/>
    </location>
</feature>
<feature type="binding site" evidence="1">
    <location>
        <begin position="166"/>
        <end position="168"/>
    </location>
    <ligand>
        <name>NADP(+)</name>
        <dbReference type="ChEBI" id="CHEBI:58349"/>
    </ligand>
</feature>
<feature type="binding site" evidence="1">
    <location>
        <position position="232"/>
    </location>
    <ligand>
        <name>NADP(+)</name>
        <dbReference type="ChEBI" id="CHEBI:58349"/>
    </ligand>
</feature>
<evidence type="ECO:0000255" key="1">
    <source>
        <dbReference type="HAMAP-Rule" id="MF_01576"/>
    </source>
</evidence>
<proteinExistence type="inferred from homology"/>
<comment type="function">
    <text evidence="1">Catalyzes the oxidation of 5,10-methylenetetrahydrofolate to 5,10-methenyltetrahydrofolate and then the hydrolysis of 5,10-methenyltetrahydrofolate to 10-formyltetrahydrofolate.</text>
</comment>
<comment type="catalytic activity">
    <reaction evidence="1">
        <text>(6R)-5,10-methylene-5,6,7,8-tetrahydrofolate + NADP(+) = (6R)-5,10-methenyltetrahydrofolate + NADPH</text>
        <dbReference type="Rhea" id="RHEA:22812"/>
        <dbReference type="ChEBI" id="CHEBI:15636"/>
        <dbReference type="ChEBI" id="CHEBI:57455"/>
        <dbReference type="ChEBI" id="CHEBI:57783"/>
        <dbReference type="ChEBI" id="CHEBI:58349"/>
        <dbReference type="EC" id="1.5.1.5"/>
    </reaction>
</comment>
<comment type="catalytic activity">
    <reaction evidence="1">
        <text>(6R)-5,10-methenyltetrahydrofolate + H2O = (6R)-10-formyltetrahydrofolate + H(+)</text>
        <dbReference type="Rhea" id="RHEA:23700"/>
        <dbReference type="ChEBI" id="CHEBI:15377"/>
        <dbReference type="ChEBI" id="CHEBI:15378"/>
        <dbReference type="ChEBI" id="CHEBI:57455"/>
        <dbReference type="ChEBI" id="CHEBI:195366"/>
        <dbReference type="EC" id="3.5.4.9"/>
    </reaction>
</comment>
<comment type="pathway">
    <text evidence="1">One-carbon metabolism; tetrahydrofolate interconversion.</text>
</comment>
<comment type="subunit">
    <text evidence="1">Homodimer.</text>
</comment>
<comment type="similarity">
    <text evidence="1">Belongs to the tetrahydrofolate dehydrogenase/cyclohydrolase family.</text>
</comment>
<protein>
    <recommendedName>
        <fullName evidence="1">Bifunctional protein FolD</fullName>
    </recommendedName>
    <domain>
        <recommendedName>
            <fullName evidence="1">Methylenetetrahydrofolate dehydrogenase</fullName>
            <ecNumber evidence="1">1.5.1.5</ecNumber>
        </recommendedName>
    </domain>
    <domain>
        <recommendedName>
            <fullName evidence="1">Methenyltetrahydrofolate cyclohydrolase</fullName>
            <ecNumber evidence="1">3.5.4.9</ecNumber>
        </recommendedName>
    </domain>
</protein>
<accession>B7NL23</accession>
<organism>
    <name type="scientific">Escherichia coli O7:K1 (strain IAI39 / ExPEC)</name>
    <dbReference type="NCBI Taxonomy" id="585057"/>
    <lineage>
        <taxon>Bacteria</taxon>
        <taxon>Pseudomonadati</taxon>
        <taxon>Pseudomonadota</taxon>
        <taxon>Gammaproteobacteria</taxon>
        <taxon>Enterobacterales</taxon>
        <taxon>Enterobacteriaceae</taxon>
        <taxon>Escherichia</taxon>
    </lineage>
</organism>
<name>FOLD_ECO7I</name>
<sequence length="288" mass="30986">MAAKIIDGKTIAQQVRSEVAQKVQARIAAGLRAPGLAVVLVGSNPASQIYVASKRKACEEVGFVSRSYDLPETTSEAELLELIDTLNADNTIDGILVQLPLPAGIDNVKVLERIHPDKDVDGFHPYNVGRLCQRAPRLRPCTPRGIVTLLERYNIDTFGLNAVVIGASNIVGRPMSMELLLAGCTTTVTHRFTKNLRHHVENADLLIVAVGKPGFIPGDWIKEGAIVIDVGINRLENGKVVGDVVFEDAAKRASYITPVPGGVGPMTVATLIENTLQACVEYHDPQGE</sequence>
<dbReference type="EC" id="1.5.1.5" evidence="1"/>
<dbReference type="EC" id="3.5.4.9" evidence="1"/>
<dbReference type="EMBL" id="CU928164">
    <property type="protein sequence ID" value="CAR16632.1"/>
    <property type="molecule type" value="Genomic_DNA"/>
</dbReference>
<dbReference type="RefSeq" id="WP_000729161.1">
    <property type="nucleotide sequence ID" value="NC_011750.1"/>
</dbReference>
<dbReference type="RefSeq" id="YP_002406525.1">
    <property type="nucleotide sequence ID" value="NC_011750.1"/>
</dbReference>
<dbReference type="SMR" id="B7NL23"/>
<dbReference type="STRING" id="585057.ECIAI39_0494"/>
<dbReference type="KEGG" id="ect:ECIAI39_0494"/>
<dbReference type="PATRIC" id="fig|585057.6.peg.524"/>
<dbReference type="HOGENOM" id="CLU_034045_2_1_6"/>
<dbReference type="UniPathway" id="UPA00193"/>
<dbReference type="Proteomes" id="UP000000749">
    <property type="component" value="Chromosome"/>
</dbReference>
<dbReference type="GO" id="GO:0005829">
    <property type="term" value="C:cytosol"/>
    <property type="evidence" value="ECO:0007669"/>
    <property type="project" value="TreeGrafter"/>
</dbReference>
<dbReference type="GO" id="GO:0004477">
    <property type="term" value="F:methenyltetrahydrofolate cyclohydrolase activity"/>
    <property type="evidence" value="ECO:0007669"/>
    <property type="project" value="UniProtKB-UniRule"/>
</dbReference>
<dbReference type="GO" id="GO:0004488">
    <property type="term" value="F:methylenetetrahydrofolate dehydrogenase (NADP+) activity"/>
    <property type="evidence" value="ECO:0007669"/>
    <property type="project" value="UniProtKB-UniRule"/>
</dbReference>
<dbReference type="GO" id="GO:0000105">
    <property type="term" value="P:L-histidine biosynthetic process"/>
    <property type="evidence" value="ECO:0007669"/>
    <property type="project" value="UniProtKB-KW"/>
</dbReference>
<dbReference type="GO" id="GO:0009086">
    <property type="term" value="P:methionine biosynthetic process"/>
    <property type="evidence" value="ECO:0007669"/>
    <property type="project" value="UniProtKB-KW"/>
</dbReference>
<dbReference type="GO" id="GO:0006164">
    <property type="term" value="P:purine nucleotide biosynthetic process"/>
    <property type="evidence" value="ECO:0007669"/>
    <property type="project" value="UniProtKB-KW"/>
</dbReference>
<dbReference type="GO" id="GO:0035999">
    <property type="term" value="P:tetrahydrofolate interconversion"/>
    <property type="evidence" value="ECO:0007669"/>
    <property type="project" value="UniProtKB-UniRule"/>
</dbReference>
<dbReference type="CDD" id="cd01080">
    <property type="entry name" value="NAD_bind_m-THF_DH_Cyclohyd"/>
    <property type="match status" value="1"/>
</dbReference>
<dbReference type="FunFam" id="3.40.50.10860:FF:000001">
    <property type="entry name" value="Bifunctional protein FolD"/>
    <property type="match status" value="1"/>
</dbReference>
<dbReference type="FunFam" id="3.40.50.720:FF:000006">
    <property type="entry name" value="Bifunctional protein FolD"/>
    <property type="match status" value="1"/>
</dbReference>
<dbReference type="Gene3D" id="3.40.50.10860">
    <property type="entry name" value="Leucine Dehydrogenase, chain A, domain 1"/>
    <property type="match status" value="1"/>
</dbReference>
<dbReference type="Gene3D" id="3.40.50.720">
    <property type="entry name" value="NAD(P)-binding Rossmann-like Domain"/>
    <property type="match status" value="1"/>
</dbReference>
<dbReference type="HAMAP" id="MF_01576">
    <property type="entry name" value="THF_DHG_CYH"/>
    <property type="match status" value="1"/>
</dbReference>
<dbReference type="InterPro" id="IPR046346">
    <property type="entry name" value="Aminoacid_DH-like_N_sf"/>
</dbReference>
<dbReference type="InterPro" id="IPR036291">
    <property type="entry name" value="NAD(P)-bd_dom_sf"/>
</dbReference>
<dbReference type="InterPro" id="IPR000672">
    <property type="entry name" value="THF_DH/CycHdrlase"/>
</dbReference>
<dbReference type="InterPro" id="IPR020630">
    <property type="entry name" value="THF_DH/CycHdrlase_cat_dom"/>
</dbReference>
<dbReference type="InterPro" id="IPR020867">
    <property type="entry name" value="THF_DH/CycHdrlase_CS"/>
</dbReference>
<dbReference type="InterPro" id="IPR020631">
    <property type="entry name" value="THF_DH/CycHdrlase_NAD-bd_dom"/>
</dbReference>
<dbReference type="NCBIfam" id="NF008058">
    <property type="entry name" value="PRK10792.1"/>
    <property type="match status" value="1"/>
</dbReference>
<dbReference type="NCBIfam" id="NF010783">
    <property type="entry name" value="PRK14186.1"/>
    <property type="match status" value="1"/>
</dbReference>
<dbReference type="PANTHER" id="PTHR48099:SF5">
    <property type="entry name" value="C-1-TETRAHYDROFOLATE SYNTHASE, CYTOPLASMIC"/>
    <property type="match status" value="1"/>
</dbReference>
<dbReference type="PANTHER" id="PTHR48099">
    <property type="entry name" value="C-1-TETRAHYDROFOLATE SYNTHASE, CYTOPLASMIC-RELATED"/>
    <property type="match status" value="1"/>
</dbReference>
<dbReference type="Pfam" id="PF00763">
    <property type="entry name" value="THF_DHG_CYH"/>
    <property type="match status" value="1"/>
</dbReference>
<dbReference type="Pfam" id="PF02882">
    <property type="entry name" value="THF_DHG_CYH_C"/>
    <property type="match status" value="1"/>
</dbReference>
<dbReference type="PRINTS" id="PR00085">
    <property type="entry name" value="THFDHDRGNASE"/>
</dbReference>
<dbReference type="SUPFAM" id="SSF53223">
    <property type="entry name" value="Aminoacid dehydrogenase-like, N-terminal domain"/>
    <property type="match status" value="1"/>
</dbReference>
<dbReference type="SUPFAM" id="SSF51735">
    <property type="entry name" value="NAD(P)-binding Rossmann-fold domains"/>
    <property type="match status" value="1"/>
</dbReference>
<dbReference type="PROSITE" id="PS00766">
    <property type="entry name" value="THF_DHG_CYH_1"/>
    <property type="match status" value="1"/>
</dbReference>
<dbReference type="PROSITE" id="PS00767">
    <property type="entry name" value="THF_DHG_CYH_2"/>
    <property type="match status" value="1"/>
</dbReference>
<reference key="1">
    <citation type="journal article" date="2009" name="PLoS Genet.">
        <title>Organised genome dynamics in the Escherichia coli species results in highly diverse adaptive paths.</title>
        <authorList>
            <person name="Touchon M."/>
            <person name="Hoede C."/>
            <person name="Tenaillon O."/>
            <person name="Barbe V."/>
            <person name="Baeriswyl S."/>
            <person name="Bidet P."/>
            <person name="Bingen E."/>
            <person name="Bonacorsi S."/>
            <person name="Bouchier C."/>
            <person name="Bouvet O."/>
            <person name="Calteau A."/>
            <person name="Chiapello H."/>
            <person name="Clermont O."/>
            <person name="Cruveiller S."/>
            <person name="Danchin A."/>
            <person name="Diard M."/>
            <person name="Dossat C."/>
            <person name="Karoui M.E."/>
            <person name="Frapy E."/>
            <person name="Garry L."/>
            <person name="Ghigo J.M."/>
            <person name="Gilles A.M."/>
            <person name="Johnson J."/>
            <person name="Le Bouguenec C."/>
            <person name="Lescat M."/>
            <person name="Mangenot S."/>
            <person name="Martinez-Jehanne V."/>
            <person name="Matic I."/>
            <person name="Nassif X."/>
            <person name="Oztas S."/>
            <person name="Petit M.A."/>
            <person name="Pichon C."/>
            <person name="Rouy Z."/>
            <person name="Ruf C.S."/>
            <person name="Schneider D."/>
            <person name="Tourret J."/>
            <person name="Vacherie B."/>
            <person name="Vallenet D."/>
            <person name="Medigue C."/>
            <person name="Rocha E.P.C."/>
            <person name="Denamur E."/>
        </authorList>
    </citation>
    <scope>NUCLEOTIDE SEQUENCE [LARGE SCALE GENOMIC DNA]</scope>
    <source>
        <strain>IAI39 / ExPEC</strain>
    </source>
</reference>
<keyword id="KW-0028">Amino-acid biosynthesis</keyword>
<keyword id="KW-0368">Histidine biosynthesis</keyword>
<keyword id="KW-0378">Hydrolase</keyword>
<keyword id="KW-0486">Methionine biosynthesis</keyword>
<keyword id="KW-0511">Multifunctional enzyme</keyword>
<keyword id="KW-0521">NADP</keyword>
<keyword id="KW-0554">One-carbon metabolism</keyword>
<keyword id="KW-0560">Oxidoreductase</keyword>
<keyword id="KW-0658">Purine biosynthesis</keyword>